<accession>O66629</accession>
<protein>
    <recommendedName>
        <fullName>Uncharacterized protein aq_272</fullName>
    </recommendedName>
</protein>
<evidence type="ECO:0000255" key="1"/>
<organism>
    <name type="scientific">Aquifex aeolicus (strain VF5)</name>
    <dbReference type="NCBI Taxonomy" id="224324"/>
    <lineage>
        <taxon>Bacteria</taxon>
        <taxon>Pseudomonadati</taxon>
        <taxon>Aquificota</taxon>
        <taxon>Aquificia</taxon>
        <taxon>Aquificales</taxon>
        <taxon>Aquificaceae</taxon>
        <taxon>Aquifex</taxon>
    </lineage>
</organism>
<feature type="chain" id="PRO_0000186850" description="Uncharacterized protein aq_272">
    <location>
        <begin position="1"/>
        <end position="149"/>
    </location>
</feature>
<feature type="coiled-coil region" evidence="1">
    <location>
        <begin position="111"/>
        <end position="140"/>
    </location>
</feature>
<dbReference type="EMBL" id="AE000657">
    <property type="protein sequence ID" value="AAC06587.1"/>
    <property type="molecule type" value="Genomic_DNA"/>
</dbReference>
<dbReference type="PIR" id="A70325">
    <property type="entry name" value="A70325"/>
</dbReference>
<dbReference type="RefSeq" id="NP_213189.1">
    <property type="nucleotide sequence ID" value="NC_000918.1"/>
</dbReference>
<dbReference type="RefSeq" id="WP_010880127.1">
    <property type="nucleotide sequence ID" value="NC_000918.1"/>
</dbReference>
<dbReference type="SMR" id="O66629"/>
<dbReference type="STRING" id="224324.aq_272"/>
<dbReference type="EnsemblBacteria" id="AAC06587">
    <property type="protein sequence ID" value="AAC06587"/>
    <property type="gene ID" value="aq_272"/>
</dbReference>
<dbReference type="KEGG" id="aae:aq_272"/>
<dbReference type="HOGENOM" id="CLU_1813172_0_0_0"/>
<dbReference type="InParanoid" id="O66629"/>
<dbReference type="OrthoDB" id="13956at2"/>
<dbReference type="Proteomes" id="UP000000798">
    <property type="component" value="Chromosome"/>
</dbReference>
<sequence length="149" mass="17945">MKLDLSTFLKRDELPFRSLEEAKEYVAKYTLNFINIELEGLPKEEWENTLKTWVKIFAFARELLKLPQERRKEVYRKYNFDSMMEGIMEDAVKVLYGFYSLGILKPEDKPHKALEKATELIENEEELLKREGIKRENLKFIKEFLKKFN</sequence>
<name>Y272_AQUAE</name>
<reference key="1">
    <citation type="journal article" date="1998" name="Nature">
        <title>The complete genome of the hyperthermophilic bacterium Aquifex aeolicus.</title>
        <authorList>
            <person name="Deckert G."/>
            <person name="Warren P.V."/>
            <person name="Gaasterland T."/>
            <person name="Young W.G."/>
            <person name="Lenox A.L."/>
            <person name="Graham D.E."/>
            <person name="Overbeek R."/>
            <person name="Snead M.A."/>
            <person name="Keller M."/>
            <person name="Aujay M."/>
            <person name="Huber R."/>
            <person name="Feldman R.A."/>
            <person name="Short J.M."/>
            <person name="Olsen G.J."/>
            <person name="Swanson R.V."/>
        </authorList>
    </citation>
    <scope>NUCLEOTIDE SEQUENCE [LARGE SCALE GENOMIC DNA]</scope>
    <source>
        <strain>VF5</strain>
    </source>
</reference>
<keyword id="KW-0175">Coiled coil</keyword>
<keyword id="KW-1185">Reference proteome</keyword>
<gene>
    <name type="ordered locus">aq_272</name>
</gene>
<proteinExistence type="predicted"/>